<accession>A6VKA3</accession>
<comment type="function">
    <text evidence="1">Part of the outer membrane protein assembly complex, which is involved in assembly and insertion of beta-barrel proteins into the outer membrane.</text>
</comment>
<comment type="subunit">
    <text evidence="1">Part of the Bam complex.</text>
</comment>
<comment type="subcellular location">
    <subcellularLocation>
        <location evidence="1">Cell outer membrane</location>
        <topology evidence="1">Lipid-anchor</topology>
    </subcellularLocation>
</comment>
<comment type="similarity">
    <text evidence="1">Belongs to the BamC family.</text>
</comment>
<proteinExistence type="inferred from homology"/>
<dbReference type="EMBL" id="CP000746">
    <property type="protein sequence ID" value="ABR73400.1"/>
    <property type="molecule type" value="Genomic_DNA"/>
</dbReference>
<dbReference type="RefSeq" id="WP_011978676.1">
    <property type="nucleotide sequence ID" value="NC_009655.1"/>
</dbReference>
<dbReference type="SMR" id="A6VKA3"/>
<dbReference type="STRING" id="339671.Asuc_0018"/>
<dbReference type="KEGG" id="asu:Asuc_0018"/>
<dbReference type="eggNOG" id="COG3317">
    <property type="taxonomic scope" value="Bacteria"/>
</dbReference>
<dbReference type="HOGENOM" id="CLU_830636_0_0_6"/>
<dbReference type="OrthoDB" id="5686855at2"/>
<dbReference type="Proteomes" id="UP000001114">
    <property type="component" value="Chromosome"/>
</dbReference>
<dbReference type="GO" id="GO:0009279">
    <property type="term" value="C:cell outer membrane"/>
    <property type="evidence" value="ECO:0007669"/>
    <property type="project" value="UniProtKB-SubCell"/>
</dbReference>
<dbReference type="GO" id="GO:0043165">
    <property type="term" value="P:Gram-negative-bacterium-type cell outer membrane assembly"/>
    <property type="evidence" value="ECO:0007669"/>
    <property type="project" value="UniProtKB-UniRule"/>
</dbReference>
<dbReference type="GO" id="GO:0051205">
    <property type="term" value="P:protein insertion into membrane"/>
    <property type="evidence" value="ECO:0007669"/>
    <property type="project" value="UniProtKB-UniRule"/>
</dbReference>
<dbReference type="Gene3D" id="3.30.530.50">
    <property type="match status" value="1"/>
</dbReference>
<dbReference type="Gene3D" id="3.30.310.170">
    <property type="entry name" value="Outer membrane protein assembly factor BamC"/>
    <property type="match status" value="1"/>
</dbReference>
<dbReference type="HAMAP" id="MF_00924">
    <property type="entry name" value="OM_assembly_BamC"/>
    <property type="match status" value="1"/>
</dbReference>
<dbReference type="InterPro" id="IPR014524">
    <property type="entry name" value="BamC"/>
</dbReference>
<dbReference type="InterPro" id="IPR042268">
    <property type="entry name" value="BamC_C"/>
</dbReference>
<dbReference type="InterPro" id="IPR010653">
    <property type="entry name" value="NlpB/DapX"/>
</dbReference>
<dbReference type="Pfam" id="PF06804">
    <property type="entry name" value="Lipoprotein_18"/>
    <property type="match status" value="1"/>
</dbReference>
<dbReference type="PROSITE" id="PS51257">
    <property type="entry name" value="PROKAR_LIPOPROTEIN"/>
    <property type="match status" value="1"/>
</dbReference>
<evidence type="ECO:0000255" key="1">
    <source>
        <dbReference type="HAMAP-Rule" id="MF_00924"/>
    </source>
</evidence>
<reference key="1">
    <citation type="journal article" date="2010" name="BMC Genomics">
        <title>A genomic perspective on the potential of Actinobacillus succinogenes for industrial succinate production.</title>
        <authorList>
            <person name="McKinlay J.B."/>
            <person name="Laivenieks M."/>
            <person name="Schindler B.D."/>
            <person name="McKinlay A.A."/>
            <person name="Siddaramappa S."/>
            <person name="Challacombe J.F."/>
            <person name="Lowry S.R."/>
            <person name="Clum A."/>
            <person name="Lapidus A.L."/>
            <person name="Burkhart K.B."/>
            <person name="Harkins V."/>
            <person name="Vieille C."/>
        </authorList>
    </citation>
    <scope>NUCLEOTIDE SEQUENCE [LARGE SCALE GENOMIC DNA]</scope>
    <source>
        <strain>ATCC 55618 / DSM 22257 / CCUG 43843 / 130Z</strain>
    </source>
</reference>
<keyword id="KW-0998">Cell outer membrane</keyword>
<keyword id="KW-0449">Lipoprotein</keyword>
<keyword id="KW-0472">Membrane</keyword>
<keyword id="KW-0564">Palmitate</keyword>
<keyword id="KW-1185">Reference proteome</keyword>
<keyword id="KW-0732">Signal</keyword>
<feature type="signal peptide" evidence="1">
    <location>
        <begin position="1"/>
        <end position="18"/>
    </location>
</feature>
<feature type="chain" id="PRO_5000258647" description="Outer membrane protein assembly factor BamC">
    <location>
        <begin position="19"/>
        <end position="333"/>
    </location>
</feature>
<feature type="lipid moiety-binding region" description="N-palmitoyl cysteine" evidence="1">
    <location>
        <position position="19"/>
    </location>
</feature>
<feature type="lipid moiety-binding region" description="S-diacylglycerol cysteine" evidence="1">
    <location>
        <position position="19"/>
    </location>
</feature>
<gene>
    <name evidence="1" type="primary">bamC</name>
    <name type="ordered locus">Asuc_0018</name>
</gene>
<organism>
    <name type="scientific">Actinobacillus succinogenes (strain ATCC 55618 / DSM 22257 / CCUG 43843 / 130Z)</name>
    <dbReference type="NCBI Taxonomy" id="339671"/>
    <lineage>
        <taxon>Bacteria</taxon>
        <taxon>Pseudomonadati</taxon>
        <taxon>Pseudomonadota</taxon>
        <taxon>Gammaproteobacteria</taxon>
        <taxon>Pasteurellales</taxon>
        <taxon>Pasteurellaceae</taxon>
        <taxon>Actinobacillus</taxon>
    </lineage>
</organism>
<sequence>MKKCLFPLSVLAVIVATGCGNTSPYANDSYEKHANAPTFTTIDTAGIRIIGQNDTYLLPATNVKKGENMDIRPPAIPMAIIGNSVAQFDGERASIIYPSEKAEVYNIRQMARLLEERSIKFTTKDNQIETDWTNFGAKTDQGETLLRYQINQVGNQEANALVVSVLEAKRDDILFTPSQKEKERYTSSLLNQFIGELNADYRSQAQAVATPTTTGPVQTAIITDGNNHLALAMSSEFQQSWSKLGDALPQLGFETEEETVGRGYRKLNYKPLGATEWARLGVNRPELEDGEYSMQISAHGKQSSVVISDEDGNAISGDAAQAMYRALANLISK</sequence>
<name>BAMC_ACTSZ</name>
<protein>
    <recommendedName>
        <fullName evidence="1">Outer membrane protein assembly factor BamC</fullName>
    </recommendedName>
</protein>